<protein>
    <recommendedName>
        <fullName>Protein FAM50B</fullName>
    </recommendedName>
    <alternativeName>
        <fullName>Protein XAP-5-like</fullName>
    </alternativeName>
</protein>
<proteinExistence type="evidence at transcript level"/>
<evidence type="ECO:0000250" key="1">
    <source>
        <dbReference type="UniProtKB" id="Q9Y247"/>
    </source>
</evidence>
<evidence type="ECO:0000256" key="2">
    <source>
        <dbReference type="SAM" id="MobiDB-lite"/>
    </source>
</evidence>
<evidence type="ECO:0000305" key="3"/>
<keyword id="KW-0007">Acetylation</keyword>
<keyword id="KW-1185">Reference proteome</keyword>
<organism>
    <name type="scientific">Mus musculus</name>
    <name type="common">Mouse</name>
    <dbReference type="NCBI Taxonomy" id="10090"/>
    <lineage>
        <taxon>Eukaryota</taxon>
        <taxon>Metazoa</taxon>
        <taxon>Chordata</taxon>
        <taxon>Craniata</taxon>
        <taxon>Vertebrata</taxon>
        <taxon>Euteleostomi</taxon>
        <taxon>Mammalia</taxon>
        <taxon>Eutheria</taxon>
        <taxon>Euarchontoglires</taxon>
        <taxon>Glires</taxon>
        <taxon>Rodentia</taxon>
        <taxon>Myomorpha</taxon>
        <taxon>Muroidea</taxon>
        <taxon>Muridae</taxon>
        <taxon>Murinae</taxon>
        <taxon>Mus</taxon>
        <taxon>Mus</taxon>
    </lineage>
</organism>
<reference key="1">
    <citation type="journal article" date="1999" name="Genomics">
        <title>Human and mouse XAP-5 and XAP-5-like (X5L) genes: identification of an ancient functional retroposon differentially expressed in testis.</title>
        <authorList>
            <person name="Sedlack Z."/>
            <person name="Muenstermann E."/>
            <person name="Dhorne-Pollet S."/>
            <person name="Otto C."/>
            <person name="Bock D."/>
            <person name="Schuetz G."/>
            <person name="Poustka A."/>
        </authorList>
    </citation>
    <scope>NUCLEOTIDE SEQUENCE [GENOMIC DNA / MRNA]</scope>
    <source>
        <tissue>Testis</tissue>
    </source>
</reference>
<reference key="2">
    <citation type="journal article" date="2005" name="Science">
        <title>The transcriptional landscape of the mammalian genome.</title>
        <authorList>
            <person name="Carninci P."/>
            <person name="Kasukawa T."/>
            <person name="Katayama S."/>
            <person name="Gough J."/>
            <person name="Frith M.C."/>
            <person name="Maeda N."/>
            <person name="Oyama R."/>
            <person name="Ravasi T."/>
            <person name="Lenhard B."/>
            <person name="Wells C."/>
            <person name="Kodzius R."/>
            <person name="Shimokawa K."/>
            <person name="Bajic V.B."/>
            <person name="Brenner S.E."/>
            <person name="Batalov S."/>
            <person name="Forrest A.R."/>
            <person name="Zavolan M."/>
            <person name="Davis M.J."/>
            <person name="Wilming L.G."/>
            <person name="Aidinis V."/>
            <person name="Allen J.E."/>
            <person name="Ambesi-Impiombato A."/>
            <person name="Apweiler R."/>
            <person name="Aturaliya R.N."/>
            <person name="Bailey T.L."/>
            <person name="Bansal M."/>
            <person name="Baxter L."/>
            <person name="Beisel K.W."/>
            <person name="Bersano T."/>
            <person name="Bono H."/>
            <person name="Chalk A.M."/>
            <person name="Chiu K.P."/>
            <person name="Choudhary V."/>
            <person name="Christoffels A."/>
            <person name="Clutterbuck D.R."/>
            <person name="Crowe M.L."/>
            <person name="Dalla E."/>
            <person name="Dalrymple B.P."/>
            <person name="de Bono B."/>
            <person name="Della Gatta G."/>
            <person name="di Bernardo D."/>
            <person name="Down T."/>
            <person name="Engstrom P."/>
            <person name="Fagiolini M."/>
            <person name="Faulkner G."/>
            <person name="Fletcher C.F."/>
            <person name="Fukushima T."/>
            <person name="Furuno M."/>
            <person name="Futaki S."/>
            <person name="Gariboldi M."/>
            <person name="Georgii-Hemming P."/>
            <person name="Gingeras T.R."/>
            <person name="Gojobori T."/>
            <person name="Green R.E."/>
            <person name="Gustincich S."/>
            <person name="Harbers M."/>
            <person name="Hayashi Y."/>
            <person name="Hensch T.K."/>
            <person name="Hirokawa N."/>
            <person name="Hill D."/>
            <person name="Huminiecki L."/>
            <person name="Iacono M."/>
            <person name="Ikeo K."/>
            <person name="Iwama A."/>
            <person name="Ishikawa T."/>
            <person name="Jakt M."/>
            <person name="Kanapin A."/>
            <person name="Katoh M."/>
            <person name="Kawasawa Y."/>
            <person name="Kelso J."/>
            <person name="Kitamura H."/>
            <person name="Kitano H."/>
            <person name="Kollias G."/>
            <person name="Krishnan S.P."/>
            <person name="Kruger A."/>
            <person name="Kummerfeld S.K."/>
            <person name="Kurochkin I.V."/>
            <person name="Lareau L.F."/>
            <person name="Lazarevic D."/>
            <person name="Lipovich L."/>
            <person name="Liu J."/>
            <person name="Liuni S."/>
            <person name="McWilliam S."/>
            <person name="Madan Babu M."/>
            <person name="Madera M."/>
            <person name="Marchionni L."/>
            <person name="Matsuda H."/>
            <person name="Matsuzawa S."/>
            <person name="Miki H."/>
            <person name="Mignone F."/>
            <person name="Miyake S."/>
            <person name="Morris K."/>
            <person name="Mottagui-Tabar S."/>
            <person name="Mulder N."/>
            <person name="Nakano N."/>
            <person name="Nakauchi H."/>
            <person name="Ng P."/>
            <person name="Nilsson R."/>
            <person name="Nishiguchi S."/>
            <person name="Nishikawa S."/>
            <person name="Nori F."/>
            <person name="Ohara O."/>
            <person name="Okazaki Y."/>
            <person name="Orlando V."/>
            <person name="Pang K.C."/>
            <person name="Pavan W.J."/>
            <person name="Pavesi G."/>
            <person name="Pesole G."/>
            <person name="Petrovsky N."/>
            <person name="Piazza S."/>
            <person name="Reed J."/>
            <person name="Reid J.F."/>
            <person name="Ring B.Z."/>
            <person name="Ringwald M."/>
            <person name="Rost B."/>
            <person name="Ruan Y."/>
            <person name="Salzberg S.L."/>
            <person name="Sandelin A."/>
            <person name="Schneider C."/>
            <person name="Schoenbach C."/>
            <person name="Sekiguchi K."/>
            <person name="Semple C.A."/>
            <person name="Seno S."/>
            <person name="Sessa L."/>
            <person name="Sheng Y."/>
            <person name="Shibata Y."/>
            <person name="Shimada H."/>
            <person name="Shimada K."/>
            <person name="Silva D."/>
            <person name="Sinclair B."/>
            <person name="Sperling S."/>
            <person name="Stupka E."/>
            <person name="Sugiura K."/>
            <person name="Sultana R."/>
            <person name="Takenaka Y."/>
            <person name="Taki K."/>
            <person name="Tammoja K."/>
            <person name="Tan S.L."/>
            <person name="Tang S."/>
            <person name="Taylor M.S."/>
            <person name="Tegner J."/>
            <person name="Teichmann S.A."/>
            <person name="Ueda H.R."/>
            <person name="van Nimwegen E."/>
            <person name="Verardo R."/>
            <person name="Wei C.L."/>
            <person name="Yagi K."/>
            <person name="Yamanishi H."/>
            <person name="Zabarovsky E."/>
            <person name="Zhu S."/>
            <person name="Zimmer A."/>
            <person name="Hide W."/>
            <person name="Bult C."/>
            <person name="Grimmond S.M."/>
            <person name="Teasdale R.D."/>
            <person name="Liu E.T."/>
            <person name="Brusic V."/>
            <person name="Quackenbush J."/>
            <person name="Wahlestedt C."/>
            <person name="Mattick J.S."/>
            <person name="Hume D.A."/>
            <person name="Kai C."/>
            <person name="Sasaki D."/>
            <person name="Tomaru Y."/>
            <person name="Fukuda S."/>
            <person name="Kanamori-Katayama M."/>
            <person name="Suzuki M."/>
            <person name="Aoki J."/>
            <person name="Arakawa T."/>
            <person name="Iida J."/>
            <person name="Imamura K."/>
            <person name="Itoh M."/>
            <person name="Kato T."/>
            <person name="Kawaji H."/>
            <person name="Kawagashira N."/>
            <person name="Kawashima T."/>
            <person name="Kojima M."/>
            <person name="Kondo S."/>
            <person name="Konno H."/>
            <person name="Nakano K."/>
            <person name="Ninomiya N."/>
            <person name="Nishio T."/>
            <person name="Okada M."/>
            <person name="Plessy C."/>
            <person name="Shibata K."/>
            <person name="Shiraki T."/>
            <person name="Suzuki S."/>
            <person name="Tagami M."/>
            <person name="Waki K."/>
            <person name="Watahiki A."/>
            <person name="Okamura-Oho Y."/>
            <person name="Suzuki H."/>
            <person name="Kawai J."/>
            <person name="Hayashizaki Y."/>
        </authorList>
    </citation>
    <scope>NUCLEOTIDE SEQUENCE [LARGE SCALE MRNA]</scope>
    <source>
        <strain>C57BL/6J</strain>
        <tissue>Testis</tissue>
    </source>
</reference>
<name>FA50B_MOUSE</name>
<sequence length="334" mass="39594">MAQYKGTMREAGRAMHLIKKREKQKEQMEVLKQRIAEETIMKSKVDKKFSAHYDAVEAELKSSTVGLVTLNDMKAKQEALLREREMQLAKREQLEQRRIQLEMLREKERRRERKRKISNLSFTLDEEEGDQEDSRQAESAEAHSAGAKKNLGKNPDVDTSFLPDREREEEENRLREELRQEWEAKREKVKGEEVEITFSYWDGSGHRRTVRMSKGSTVQQFLKRALQGLRRDFRELRAAGVEQLMYVKEDLILPHYHTFYDFIVAKARGKSGPLFSFDVHDDVRLLSDATMEKDESHAGKVVLRSWYEKNKHIFPASRWEPYDPEKKWDRYTIR</sequence>
<accession>Q9WTJ8</accession>
<accession>Q80X84</accession>
<accession>Q9D993</accession>
<feature type="initiator methionine" description="Removed" evidence="1">
    <location>
        <position position="1"/>
    </location>
</feature>
<feature type="chain" id="PRO_0000068287" description="Protein FAM50B">
    <location>
        <begin position="2"/>
        <end position="334"/>
    </location>
</feature>
<feature type="region of interest" description="Disordered" evidence="2">
    <location>
        <begin position="122"/>
        <end position="175"/>
    </location>
</feature>
<feature type="compositionally biased region" description="Basic and acidic residues" evidence="2">
    <location>
        <begin position="132"/>
        <end position="141"/>
    </location>
</feature>
<feature type="compositionally biased region" description="Basic and acidic residues" evidence="2">
    <location>
        <begin position="163"/>
        <end position="175"/>
    </location>
</feature>
<feature type="modified residue" description="N-acetylalanine" evidence="1">
    <location>
        <position position="2"/>
    </location>
</feature>
<feature type="sequence conflict" description="In Ref. 2; AK007247." evidence="3" ref="2">
    <original>L</original>
    <variation>V</variation>
    <location>
        <position position="229"/>
    </location>
</feature>
<dbReference type="EMBL" id="Y18506">
    <property type="protein sequence ID" value="CAB46283.1"/>
    <property type="molecule type" value="mRNA"/>
</dbReference>
<dbReference type="EMBL" id="Y18508">
    <property type="protein sequence ID" value="CAB46284.1"/>
    <property type="molecule type" value="Genomic_DNA"/>
</dbReference>
<dbReference type="EMBL" id="AK007247">
    <property type="status" value="NOT_ANNOTATED_CDS"/>
    <property type="molecule type" value="mRNA"/>
</dbReference>
<dbReference type="CCDS" id="CCDS49232.1"/>
<dbReference type="RefSeq" id="NP_001369785.1">
    <property type="nucleotide sequence ID" value="NM_001382856.1"/>
</dbReference>
<dbReference type="RefSeq" id="NP_620085.2">
    <property type="nucleotide sequence ID" value="NM_138746.2"/>
</dbReference>
<dbReference type="RefSeq" id="XP_006516589.1">
    <property type="nucleotide sequence ID" value="XM_006516526.1"/>
</dbReference>
<dbReference type="SMR" id="Q9WTJ8"/>
<dbReference type="BioGRID" id="223874">
    <property type="interactions" value="4"/>
</dbReference>
<dbReference type="FunCoup" id="Q9WTJ8">
    <property type="interactions" value="288"/>
</dbReference>
<dbReference type="STRING" id="10090.ENSMUSP00000152187"/>
<dbReference type="iPTMnet" id="Q9WTJ8"/>
<dbReference type="PhosphoSitePlus" id="Q9WTJ8"/>
<dbReference type="jPOST" id="Q9WTJ8"/>
<dbReference type="PaxDb" id="10090-ENSMUSP00000046980"/>
<dbReference type="PeptideAtlas" id="Q9WTJ8"/>
<dbReference type="ProteomicsDB" id="277028"/>
<dbReference type="Antibodypedia" id="24439">
    <property type="antibodies" value="62 antibodies from 14 providers"/>
</dbReference>
<dbReference type="Ensembl" id="ENSMUST00000039605.8">
    <property type="protein sequence ID" value="ENSMUSP00000046980.7"/>
    <property type="gene ID" value="ENSMUSG00000038246.8"/>
</dbReference>
<dbReference type="Ensembl" id="ENSMUST00000221037.2">
    <property type="protein sequence ID" value="ENSMUSP00000152187.2"/>
    <property type="gene ID" value="ENSMUSG00000038246.8"/>
</dbReference>
<dbReference type="GeneID" id="108161"/>
<dbReference type="KEGG" id="mmu:108161"/>
<dbReference type="UCSC" id="uc007qbl.1">
    <property type="organism name" value="mouse"/>
</dbReference>
<dbReference type="AGR" id="MGI:1351640"/>
<dbReference type="CTD" id="26240"/>
<dbReference type="MGI" id="MGI:1351640">
    <property type="gene designation" value="Fam50b"/>
</dbReference>
<dbReference type="VEuPathDB" id="HostDB:ENSMUSG00000038246"/>
<dbReference type="eggNOG" id="KOG2894">
    <property type="taxonomic scope" value="Eukaryota"/>
</dbReference>
<dbReference type="GeneTree" id="ENSGT00390000004735"/>
<dbReference type="HOGENOM" id="CLU_037985_1_1_1"/>
<dbReference type="InParanoid" id="Q9WTJ8"/>
<dbReference type="OMA" id="HKGGTVQ"/>
<dbReference type="OrthoDB" id="1562195at2759"/>
<dbReference type="PhylomeDB" id="Q9WTJ8"/>
<dbReference type="TreeFam" id="TF314738"/>
<dbReference type="BioGRID-ORCS" id="108161">
    <property type="hits" value="6 hits in 77 CRISPR screens"/>
</dbReference>
<dbReference type="PRO" id="PR:Q9WTJ8"/>
<dbReference type="Proteomes" id="UP000000589">
    <property type="component" value="Chromosome 13"/>
</dbReference>
<dbReference type="RNAct" id="Q9WTJ8">
    <property type="molecule type" value="protein"/>
</dbReference>
<dbReference type="Bgee" id="ENSMUSG00000038246">
    <property type="expression patterns" value="Expressed in seminiferous tubule of testis and 12 other cell types or tissues"/>
</dbReference>
<dbReference type="GO" id="GO:0045171">
    <property type="term" value="C:intercellular bridge"/>
    <property type="evidence" value="ECO:0007669"/>
    <property type="project" value="Ensembl"/>
</dbReference>
<dbReference type="GO" id="GO:0030496">
    <property type="term" value="C:midbody"/>
    <property type="evidence" value="ECO:0007669"/>
    <property type="project" value="Ensembl"/>
</dbReference>
<dbReference type="GO" id="GO:0005654">
    <property type="term" value="C:nucleoplasm"/>
    <property type="evidence" value="ECO:0007669"/>
    <property type="project" value="Ensembl"/>
</dbReference>
<dbReference type="InterPro" id="IPR048337">
    <property type="entry name" value="FAM50A/XAP5_C"/>
</dbReference>
<dbReference type="InterPro" id="IPR007005">
    <property type="entry name" value="XAP5"/>
</dbReference>
<dbReference type="PANTHER" id="PTHR12722:SF1">
    <property type="entry name" value="PROTEIN FAM50B"/>
    <property type="match status" value="1"/>
</dbReference>
<dbReference type="PANTHER" id="PTHR12722">
    <property type="entry name" value="XAP-5 PROTEIN-RELATED"/>
    <property type="match status" value="1"/>
</dbReference>
<dbReference type="Pfam" id="PF04921">
    <property type="entry name" value="XAP5"/>
    <property type="match status" value="1"/>
</dbReference>
<gene>
    <name type="primary">Fam50b</name>
    <name type="synonym">D0H6S2654E</name>
    <name type="synonym">X5l</name>
</gene>
<comment type="tissue specificity">
    <text>Widely expressed. Abundant in testis, where it is expressed in seminiferous tubules, not in the interstitium. At the cellular level, expressed in primary spermatocytes and round spermatids, but not detectable in spermatogonia, elongating spermatids, mature spermatozoa, Sertoli cells or Leydig cells.</text>
</comment>
<comment type="similarity">
    <text evidence="3">Belongs to the FAM50 family.</text>
</comment>
<comment type="sequence caution" evidence="3">
    <conflict type="frameshift">
        <sequence resource="EMBL" id="AK007247"/>
    </conflict>
</comment>